<accession>Q1JEH6</accession>
<proteinExistence type="inferred from homology"/>
<reference key="1">
    <citation type="journal article" date="2006" name="Proc. Natl. Acad. Sci. U.S.A.">
        <title>Molecular genetic anatomy of inter- and intraserotype variation in the human bacterial pathogen group A Streptococcus.</title>
        <authorList>
            <person name="Beres S.B."/>
            <person name="Richter E.W."/>
            <person name="Nagiec M.J."/>
            <person name="Sumby P."/>
            <person name="Porcella S.F."/>
            <person name="DeLeo F.R."/>
            <person name="Musser J.M."/>
        </authorList>
    </citation>
    <scope>NUCLEOTIDE SEQUENCE [LARGE SCALE GENOMIC DNA]</scope>
    <source>
        <strain>MGAS10270</strain>
    </source>
</reference>
<feature type="chain" id="PRO_1000058733" description="Putative competence-damage inducible protein">
    <location>
        <begin position="1"/>
        <end position="423"/>
    </location>
</feature>
<dbReference type="EMBL" id="CP000260">
    <property type="protein sequence ID" value="ABF34933.1"/>
    <property type="molecule type" value="Genomic_DNA"/>
</dbReference>
<dbReference type="SMR" id="Q1JEH6"/>
<dbReference type="KEGG" id="sph:MGAS10270_Spy1868"/>
<dbReference type="HOGENOM" id="CLU_030805_9_3_9"/>
<dbReference type="Proteomes" id="UP000002436">
    <property type="component" value="Chromosome"/>
</dbReference>
<dbReference type="CDD" id="cd00885">
    <property type="entry name" value="cinA"/>
    <property type="match status" value="1"/>
</dbReference>
<dbReference type="Gene3D" id="3.30.70.2860">
    <property type="match status" value="1"/>
</dbReference>
<dbReference type="Gene3D" id="3.90.950.20">
    <property type="entry name" value="CinA-like"/>
    <property type="match status" value="1"/>
</dbReference>
<dbReference type="Gene3D" id="3.40.980.10">
    <property type="entry name" value="MoaB/Mog-like domain"/>
    <property type="match status" value="1"/>
</dbReference>
<dbReference type="HAMAP" id="MF_00226_B">
    <property type="entry name" value="CinA_B"/>
    <property type="match status" value="1"/>
</dbReference>
<dbReference type="InterPro" id="IPR050101">
    <property type="entry name" value="CinA"/>
</dbReference>
<dbReference type="InterPro" id="IPR036653">
    <property type="entry name" value="CinA-like_C"/>
</dbReference>
<dbReference type="InterPro" id="IPR008136">
    <property type="entry name" value="CinA_C"/>
</dbReference>
<dbReference type="InterPro" id="IPR041424">
    <property type="entry name" value="CinA_KH"/>
</dbReference>
<dbReference type="InterPro" id="IPR008135">
    <property type="entry name" value="Competence-induced_CinA"/>
</dbReference>
<dbReference type="InterPro" id="IPR036425">
    <property type="entry name" value="MoaB/Mog-like_dom_sf"/>
</dbReference>
<dbReference type="InterPro" id="IPR001453">
    <property type="entry name" value="MoaB/Mog_dom"/>
</dbReference>
<dbReference type="NCBIfam" id="TIGR00200">
    <property type="entry name" value="cinA_nterm"/>
    <property type="match status" value="1"/>
</dbReference>
<dbReference type="NCBIfam" id="TIGR00177">
    <property type="entry name" value="molyb_syn"/>
    <property type="match status" value="1"/>
</dbReference>
<dbReference type="NCBIfam" id="TIGR00199">
    <property type="entry name" value="PncC_domain"/>
    <property type="match status" value="1"/>
</dbReference>
<dbReference type="NCBIfam" id="NF001813">
    <property type="entry name" value="PRK00549.1"/>
    <property type="match status" value="1"/>
</dbReference>
<dbReference type="PANTHER" id="PTHR13939">
    <property type="entry name" value="NICOTINAMIDE-NUCLEOTIDE AMIDOHYDROLASE PNCC"/>
    <property type="match status" value="1"/>
</dbReference>
<dbReference type="PANTHER" id="PTHR13939:SF0">
    <property type="entry name" value="NMN AMIDOHYDROLASE-LIKE PROTEIN YFAY"/>
    <property type="match status" value="1"/>
</dbReference>
<dbReference type="Pfam" id="PF02464">
    <property type="entry name" value="CinA"/>
    <property type="match status" value="1"/>
</dbReference>
<dbReference type="Pfam" id="PF18146">
    <property type="entry name" value="CinA_KH"/>
    <property type="match status" value="1"/>
</dbReference>
<dbReference type="Pfam" id="PF00994">
    <property type="entry name" value="MoCF_biosynth"/>
    <property type="match status" value="1"/>
</dbReference>
<dbReference type="PIRSF" id="PIRSF006728">
    <property type="entry name" value="CinA"/>
    <property type="match status" value="1"/>
</dbReference>
<dbReference type="SMART" id="SM00852">
    <property type="entry name" value="MoCF_biosynth"/>
    <property type="match status" value="1"/>
</dbReference>
<dbReference type="SUPFAM" id="SSF142433">
    <property type="entry name" value="CinA-like"/>
    <property type="match status" value="1"/>
</dbReference>
<dbReference type="SUPFAM" id="SSF53218">
    <property type="entry name" value="Molybdenum cofactor biosynthesis proteins"/>
    <property type="match status" value="1"/>
</dbReference>
<evidence type="ECO:0000255" key="1">
    <source>
        <dbReference type="HAMAP-Rule" id="MF_00226"/>
    </source>
</evidence>
<sequence>MKAELIAVGTEILTGQIVNTNAQFLSEKMAELGIDVYFQTAVGDNEERLLSVITTASQRSDLVILCGGLGPTKDDLTKQTLAKYLRKDLVYDEQACQKLDDFFAKRKPSSRTPNNERQAQVIEGSIPLPNKTGLAVGGFITVDGISYVVLPGPPSELKPMVNEELVPLLSKQYSTLYSKVLRFFGIGESQLVTVLSDFIENQTDPTIAPYAKTGEVTLRLSTKTENQALADKKLGQLEAQLLSRKTLEGQPLADVFYGYGEDNSLARETFELLVKYDKTITAAESLTAGLFQSTLASFPGASQVFNGGFVTYSMEEKAKMLGLPLEELKSHGVVSAYTAEGMAEQARLLTGADIGVSLTGVAGPDMLEEQPAGTVFIGLATQNKVESIKVLISGRSRLDVRYIATLHAFNMVRKTLLKLENLL</sequence>
<comment type="similarity">
    <text evidence="1">Belongs to the CinA family.</text>
</comment>
<organism>
    <name type="scientific">Streptococcus pyogenes serotype M2 (strain MGAS10270)</name>
    <dbReference type="NCBI Taxonomy" id="370552"/>
    <lineage>
        <taxon>Bacteria</taxon>
        <taxon>Bacillati</taxon>
        <taxon>Bacillota</taxon>
        <taxon>Bacilli</taxon>
        <taxon>Lactobacillales</taxon>
        <taxon>Streptococcaceae</taxon>
        <taxon>Streptococcus</taxon>
    </lineage>
</organism>
<name>CINA_STRPD</name>
<protein>
    <recommendedName>
        <fullName evidence="1">Putative competence-damage inducible protein</fullName>
    </recommendedName>
</protein>
<gene>
    <name evidence="1" type="primary">cinA</name>
    <name type="ordered locus">MGAS10270_Spy1868</name>
</gene>